<gene>
    <name evidence="1" type="primary">rplU</name>
    <name type="ordered locus">FTN_0675</name>
</gene>
<accession>A0Q5Q2</accession>
<feature type="chain" id="PRO_1000067835" description="Large ribosomal subunit protein bL21">
    <location>
        <begin position="1"/>
        <end position="104"/>
    </location>
</feature>
<name>RL21_FRATN</name>
<keyword id="KW-0687">Ribonucleoprotein</keyword>
<keyword id="KW-0689">Ribosomal protein</keyword>
<keyword id="KW-0694">RNA-binding</keyword>
<keyword id="KW-0699">rRNA-binding</keyword>
<reference key="1">
    <citation type="journal article" date="2007" name="Genome Biol.">
        <title>Comparison of Francisella tularensis genomes reveals evolutionary events associated with the emergence of human pathogenic strains.</title>
        <authorList>
            <person name="Rohmer L."/>
            <person name="Fong C."/>
            <person name="Abmayr S."/>
            <person name="Wasnick M."/>
            <person name="Larson Freeman T.J."/>
            <person name="Radey M."/>
            <person name="Guina T."/>
            <person name="Svensson K."/>
            <person name="Hayden H.S."/>
            <person name="Jacobs M."/>
            <person name="Gallagher L.A."/>
            <person name="Manoil C."/>
            <person name="Ernst R.K."/>
            <person name="Drees B."/>
            <person name="Buckley D."/>
            <person name="Haugen E."/>
            <person name="Bovee D."/>
            <person name="Zhou Y."/>
            <person name="Chang J."/>
            <person name="Levy R."/>
            <person name="Lim R."/>
            <person name="Gillett W."/>
            <person name="Guenthener D."/>
            <person name="Kang A."/>
            <person name="Shaffer S.A."/>
            <person name="Taylor G."/>
            <person name="Chen J."/>
            <person name="Gallis B."/>
            <person name="D'Argenio D.A."/>
            <person name="Forsman M."/>
            <person name="Olson M.V."/>
            <person name="Goodlett D.R."/>
            <person name="Kaul R."/>
            <person name="Miller S.I."/>
            <person name="Brittnacher M.J."/>
        </authorList>
    </citation>
    <scope>NUCLEOTIDE SEQUENCE [LARGE SCALE GENOMIC DNA]</scope>
    <source>
        <strain>U112</strain>
    </source>
</reference>
<comment type="function">
    <text evidence="1">This protein binds to 23S rRNA in the presence of protein L20.</text>
</comment>
<comment type="subunit">
    <text evidence="1">Part of the 50S ribosomal subunit. Contacts protein L20.</text>
</comment>
<comment type="similarity">
    <text evidence="1">Belongs to the bacterial ribosomal protein bL21 family.</text>
</comment>
<protein>
    <recommendedName>
        <fullName evidence="1">Large ribosomal subunit protein bL21</fullName>
    </recommendedName>
    <alternativeName>
        <fullName evidence="2">50S ribosomal protein L21</fullName>
    </alternativeName>
</protein>
<dbReference type="EMBL" id="CP000439">
    <property type="protein sequence ID" value="ABK89567.1"/>
    <property type="molecule type" value="Genomic_DNA"/>
</dbReference>
<dbReference type="RefSeq" id="WP_003016753.1">
    <property type="nucleotide sequence ID" value="NZ_CP009633.1"/>
</dbReference>
<dbReference type="SMR" id="A0Q5Q2"/>
<dbReference type="GeneID" id="75263828"/>
<dbReference type="KEGG" id="ftn:FTN_0675"/>
<dbReference type="KEGG" id="ftx:AW25_1350"/>
<dbReference type="BioCyc" id="FTUL401614:G1G75-702-MONOMER"/>
<dbReference type="Proteomes" id="UP000000762">
    <property type="component" value="Chromosome"/>
</dbReference>
<dbReference type="GO" id="GO:0005737">
    <property type="term" value="C:cytoplasm"/>
    <property type="evidence" value="ECO:0007669"/>
    <property type="project" value="UniProtKB-ARBA"/>
</dbReference>
<dbReference type="GO" id="GO:1990904">
    <property type="term" value="C:ribonucleoprotein complex"/>
    <property type="evidence" value="ECO:0007669"/>
    <property type="project" value="UniProtKB-KW"/>
</dbReference>
<dbReference type="GO" id="GO:0005840">
    <property type="term" value="C:ribosome"/>
    <property type="evidence" value="ECO:0007669"/>
    <property type="project" value="UniProtKB-KW"/>
</dbReference>
<dbReference type="GO" id="GO:0019843">
    <property type="term" value="F:rRNA binding"/>
    <property type="evidence" value="ECO:0007669"/>
    <property type="project" value="UniProtKB-UniRule"/>
</dbReference>
<dbReference type="GO" id="GO:0003735">
    <property type="term" value="F:structural constituent of ribosome"/>
    <property type="evidence" value="ECO:0007669"/>
    <property type="project" value="InterPro"/>
</dbReference>
<dbReference type="GO" id="GO:0006412">
    <property type="term" value="P:translation"/>
    <property type="evidence" value="ECO:0007669"/>
    <property type="project" value="UniProtKB-UniRule"/>
</dbReference>
<dbReference type="HAMAP" id="MF_01363">
    <property type="entry name" value="Ribosomal_bL21"/>
    <property type="match status" value="1"/>
</dbReference>
<dbReference type="InterPro" id="IPR028909">
    <property type="entry name" value="bL21-like"/>
</dbReference>
<dbReference type="InterPro" id="IPR036164">
    <property type="entry name" value="bL21-like_sf"/>
</dbReference>
<dbReference type="InterPro" id="IPR001787">
    <property type="entry name" value="Ribosomal_bL21"/>
</dbReference>
<dbReference type="InterPro" id="IPR018258">
    <property type="entry name" value="Ribosomal_bL21_CS"/>
</dbReference>
<dbReference type="NCBIfam" id="TIGR00061">
    <property type="entry name" value="L21"/>
    <property type="match status" value="1"/>
</dbReference>
<dbReference type="PANTHER" id="PTHR21349">
    <property type="entry name" value="50S RIBOSOMAL PROTEIN L21"/>
    <property type="match status" value="1"/>
</dbReference>
<dbReference type="PANTHER" id="PTHR21349:SF0">
    <property type="entry name" value="LARGE RIBOSOMAL SUBUNIT PROTEIN BL21M"/>
    <property type="match status" value="1"/>
</dbReference>
<dbReference type="Pfam" id="PF00829">
    <property type="entry name" value="Ribosomal_L21p"/>
    <property type="match status" value="1"/>
</dbReference>
<dbReference type="SUPFAM" id="SSF141091">
    <property type="entry name" value="L21p-like"/>
    <property type="match status" value="1"/>
</dbReference>
<dbReference type="PROSITE" id="PS01169">
    <property type="entry name" value="RIBOSOMAL_L21"/>
    <property type="match status" value="1"/>
</dbReference>
<proteinExistence type="inferred from homology"/>
<evidence type="ECO:0000255" key="1">
    <source>
        <dbReference type="HAMAP-Rule" id="MF_01363"/>
    </source>
</evidence>
<evidence type="ECO:0000305" key="2"/>
<sequence length="104" mass="11562">MYAIIKNGGKQYKVKEGEVVKLEKFDLGIGEKVEFDTVLMGQTAAGEVKIGAPTVAGAKVVGEVVEQGRHKKVKIMKFRRRKHSMKQQGHRQYFTAVKVSSISL</sequence>
<organism>
    <name type="scientific">Francisella tularensis subsp. novicida (strain U112)</name>
    <dbReference type="NCBI Taxonomy" id="401614"/>
    <lineage>
        <taxon>Bacteria</taxon>
        <taxon>Pseudomonadati</taxon>
        <taxon>Pseudomonadota</taxon>
        <taxon>Gammaproteobacteria</taxon>
        <taxon>Thiotrichales</taxon>
        <taxon>Francisellaceae</taxon>
        <taxon>Francisella</taxon>
    </lineage>
</organism>